<sequence length="361" mass="40919">MNDGTDYRALLLADTPLIDVRAPIEFEQGAMPGAINLPLMMDDERAAVGTCYKRQGADAALALGHRLVCGDIRQQRLEAWKAAYQRFPNGYLCCARGGQRSHIVQRWLQETGIDCPLIEGGYKALRQTAIQATWQLAQKPILLIGGCTGSGKTQLVRQQPNGVDLEGLARHRGSSFGRTLKPQLSQASFENKLAVELLKINARQTLKRWVLEDEGRTIGANHLPECLRERMVQAPIAVVEDPFSLRLERLREEYFIRMHHDFTHAYGDEAGWQAYSEYLHHGLFAIRRRLGLQRFAELTDTLDRALAEQLSSGSTDGHMAWLVPLLNEYYDPMYRYQLEKKAANIVFRGTWQDVANWLKAQ</sequence>
<protein>
    <recommendedName>
        <fullName evidence="1">tRNA 2-selenouridine synthase</fullName>
        <ecNumber evidence="1">2.9.1.3</ecNumber>
    </recommendedName>
</protein>
<feature type="chain" id="PRO_1000186087" description="tRNA 2-selenouridine synthase">
    <location>
        <begin position="1"/>
        <end position="361"/>
    </location>
</feature>
<feature type="domain" description="Rhodanese" evidence="1">
    <location>
        <begin position="11"/>
        <end position="134"/>
    </location>
</feature>
<feature type="active site" description="S-selanylcysteine intermediate" evidence="1">
    <location>
        <position position="94"/>
    </location>
</feature>
<keyword id="KW-0711">Selenium</keyword>
<keyword id="KW-0808">Transferase</keyword>
<accession>B4TMJ2</accession>
<dbReference type="EC" id="2.9.1.3" evidence="1"/>
<dbReference type="EMBL" id="CP001127">
    <property type="protein sequence ID" value="ACF89002.1"/>
    <property type="molecule type" value="Genomic_DNA"/>
</dbReference>
<dbReference type="SMR" id="B4TMJ2"/>
<dbReference type="KEGG" id="sew:SeSA_A0577"/>
<dbReference type="HOGENOM" id="CLU_043456_1_0_6"/>
<dbReference type="Proteomes" id="UP000001865">
    <property type="component" value="Chromosome"/>
</dbReference>
<dbReference type="GO" id="GO:0016765">
    <property type="term" value="F:transferase activity, transferring alkyl or aryl (other than methyl) groups"/>
    <property type="evidence" value="ECO:0007669"/>
    <property type="project" value="UniProtKB-UniRule"/>
</dbReference>
<dbReference type="GO" id="GO:0043828">
    <property type="term" value="F:tRNA 2-selenouridine synthase activity"/>
    <property type="evidence" value="ECO:0007669"/>
    <property type="project" value="UniProtKB-EC"/>
</dbReference>
<dbReference type="GO" id="GO:0002098">
    <property type="term" value="P:tRNA wobble uridine modification"/>
    <property type="evidence" value="ECO:0007669"/>
    <property type="project" value="UniProtKB-UniRule"/>
</dbReference>
<dbReference type="CDD" id="cd01520">
    <property type="entry name" value="RHOD_YbbB"/>
    <property type="match status" value="1"/>
</dbReference>
<dbReference type="FunFam" id="3.40.250.10:FF:000009">
    <property type="entry name" value="tRNA 2-selenouridine/geranyl-2-thiouridine synthase"/>
    <property type="match status" value="1"/>
</dbReference>
<dbReference type="Gene3D" id="3.40.250.10">
    <property type="entry name" value="Rhodanese-like domain"/>
    <property type="match status" value="1"/>
</dbReference>
<dbReference type="HAMAP" id="MF_01622">
    <property type="entry name" value="tRNA_sel_U_synth"/>
    <property type="match status" value="1"/>
</dbReference>
<dbReference type="InterPro" id="IPR001763">
    <property type="entry name" value="Rhodanese-like_dom"/>
</dbReference>
<dbReference type="InterPro" id="IPR036873">
    <property type="entry name" value="Rhodanese-like_dom_sf"/>
</dbReference>
<dbReference type="InterPro" id="IPR017582">
    <property type="entry name" value="SelU"/>
</dbReference>
<dbReference type="NCBIfam" id="NF008749">
    <property type="entry name" value="PRK11784.1-1"/>
    <property type="match status" value="1"/>
</dbReference>
<dbReference type="NCBIfam" id="NF008751">
    <property type="entry name" value="PRK11784.1-3"/>
    <property type="match status" value="1"/>
</dbReference>
<dbReference type="NCBIfam" id="TIGR03167">
    <property type="entry name" value="tRNA_sel_U_synt"/>
    <property type="match status" value="1"/>
</dbReference>
<dbReference type="PANTHER" id="PTHR30401">
    <property type="entry name" value="TRNA 2-SELENOURIDINE SYNTHASE"/>
    <property type="match status" value="1"/>
</dbReference>
<dbReference type="PANTHER" id="PTHR30401:SF0">
    <property type="entry name" value="TRNA 2-SELENOURIDINE SYNTHASE"/>
    <property type="match status" value="1"/>
</dbReference>
<dbReference type="Pfam" id="PF00581">
    <property type="entry name" value="Rhodanese"/>
    <property type="match status" value="1"/>
</dbReference>
<dbReference type="SMART" id="SM00450">
    <property type="entry name" value="RHOD"/>
    <property type="match status" value="1"/>
</dbReference>
<dbReference type="SUPFAM" id="SSF52821">
    <property type="entry name" value="Rhodanese/Cell cycle control phosphatase"/>
    <property type="match status" value="1"/>
</dbReference>
<dbReference type="PROSITE" id="PS50206">
    <property type="entry name" value="RHODANESE_3"/>
    <property type="match status" value="1"/>
</dbReference>
<gene>
    <name evidence="1" type="primary">selU</name>
    <name type="ordered locus">SeSA_A0577</name>
</gene>
<reference key="1">
    <citation type="journal article" date="2011" name="J. Bacteriol.">
        <title>Comparative genomics of 28 Salmonella enterica isolates: evidence for CRISPR-mediated adaptive sublineage evolution.</title>
        <authorList>
            <person name="Fricke W.F."/>
            <person name="Mammel M.K."/>
            <person name="McDermott P.F."/>
            <person name="Tartera C."/>
            <person name="White D.G."/>
            <person name="Leclerc J.E."/>
            <person name="Ravel J."/>
            <person name="Cebula T.A."/>
        </authorList>
    </citation>
    <scope>NUCLEOTIDE SEQUENCE [LARGE SCALE GENOMIC DNA]</scope>
    <source>
        <strain>CVM19633</strain>
    </source>
</reference>
<proteinExistence type="inferred from homology"/>
<evidence type="ECO:0000255" key="1">
    <source>
        <dbReference type="HAMAP-Rule" id="MF_01622"/>
    </source>
</evidence>
<name>SELU_SALSV</name>
<comment type="function">
    <text evidence="1">Involved in the post-transcriptional modification of the uridine at the wobble position (U34) of tRNA(Lys), tRNA(Glu) and tRNA(Gln). Catalyzes the conversion of 2-thiouridine (S2U-RNA) to 2-selenouridine (Se2U-RNA). Acts in a two-step process involving geranylation of 2-thiouridine (S2U) to S-geranyl-2-thiouridine (geS2U) and subsequent selenation of the latter derivative to 2-selenouridine (Se2U) in the tRNA chain.</text>
</comment>
<comment type="catalytic activity">
    <reaction evidence="1">
        <text>5-methylaminomethyl-2-thiouridine(34) in tRNA + selenophosphate + (2E)-geranyl diphosphate + H2O + H(+) = 5-methylaminomethyl-2-selenouridine(34) in tRNA + (2E)-thiogeraniol + phosphate + diphosphate</text>
        <dbReference type="Rhea" id="RHEA:42716"/>
        <dbReference type="Rhea" id="RHEA-COMP:10195"/>
        <dbReference type="Rhea" id="RHEA-COMP:10196"/>
        <dbReference type="ChEBI" id="CHEBI:15377"/>
        <dbReference type="ChEBI" id="CHEBI:15378"/>
        <dbReference type="ChEBI" id="CHEBI:16144"/>
        <dbReference type="ChEBI" id="CHEBI:33019"/>
        <dbReference type="ChEBI" id="CHEBI:43474"/>
        <dbReference type="ChEBI" id="CHEBI:58057"/>
        <dbReference type="ChEBI" id="CHEBI:74455"/>
        <dbReference type="ChEBI" id="CHEBI:82743"/>
        <dbReference type="ChEBI" id="CHEBI:143703"/>
        <dbReference type="EC" id="2.9.1.3"/>
    </reaction>
    <physiologicalReaction direction="left-to-right" evidence="1">
        <dbReference type="Rhea" id="RHEA:42717"/>
    </physiologicalReaction>
</comment>
<comment type="catalytic activity">
    <reaction evidence="1">
        <text>5-methylaminomethyl-2-thiouridine(34) in tRNA + (2E)-geranyl diphosphate = 5-methylaminomethyl-S-(2E)-geranyl-thiouridine(34) in tRNA + diphosphate</text>
        <dbReference type="Rhea" id="RHEA:14085"/>
        <dbReference type="Rhea" id="RHEA-COMP:10195"/>
        <dbReference type="Rhea" id="RHEA-COMP:14654"/>
        <dbReference type="ChEBI" id="CHEBI:33019"/>
        <dbReference type="ChEBI" id="CHEBI:58057"/>
        <dbReference type="ChEBI" id="CHEBI:74455"/>
        <dbReference type="ChEBI" id="CHEBI:140632"/>
    </reaction>
    <physiologicalReaction direction="left-to-right" evidence="1">
        <dbReference type="Rhea" id="RHEA:14086"/>
    </physiologicalReaction>
</comment>
<comment type="catalytic activity">
    <reaction evidence="1">
        <text>5-methylaminomethyl-S-(2E)-geranyl-thiouridine(34) in tRNA + selenophosphate + H(+) = 5-methylaminomethyl-2-(Se-phospho)selenouridine(34) in tRNA + (2E)-thiogeraniol</text>
        <dbReference type="Rhea" id="RHEA:60172"/>
        <dbReference type="Rhea" id="RHEA-COMP:14654"/>
        <dbReference type="Rhea" id="RHEA-COMP:15523"/>
        <dbReference type="ChEBI" id="CHEBI:15378"/>
        <dbReference type="ChEBI" id="CHEBI:16144"/>
        <dbReference type="ChEBI" id="CHEBI:140632"/>
        <dbReference type="ChEBI" id="CHEBI:143702"/>
        <dbReference type="ChEBI" id="CHEBI:143703"/>
    </reaction>
    <physiologicalReaction direction="left-to-right" evidence="1">
        <dbReference type="Rhea" id="RHEA:60173"/>
    </physiologicalReaction>
</comment>
<comment type="catalytic activity">
    <reaction evidence="1">
        <text>5-methylaminomethyl-2-(Se-phospho)selenouridine(34) in tRNA + H2O = 5-methylaminomethyl-2-selenouridine(34) in tRNA + phosphate</text>
        <dbReference type="Rhea" id="RHEA:60176"/>
        <dbReference type="Rhea" id="RHEA-COMP:10196"/>
        <dbReference type="Rhea" id="RHEA-COMP:15523"/>
        <dbReference type="ChEBI" id="CHEBI:15377"/>
        <dbReference type="ChEBI" id="CHEBI:43474"/>
        <dbReference type="ChEBI" id="CHEBI:82743"/>
        <dbReference type="ChEBI" id="CHEBI:143702"/>
    </reaction>
    <physiologicalReaction direction="left-to-right" evidence="1">
        <dbReference type="Rhea" id="RHEA:60177"/>
    </physiologicalReaction>
</comment>
<comment type="subunit">
    <text evidence="1">Monomer.</text>
</comment>
<comment type="similarity">
    <text evidence="1">Belongs to the SelU family.</text>
</comment>
<organism>
    <name type="scientific">Salmonella schwarzengrund (strain CVM19633)</name>
    <dbReference type="NCBI Taxonomy" id="439843"/>
    <lineage>
        <taxon>Bacteria</taxon>
        <taxon>Pseudomonadati</taxon>
        <taxon>Pseudomonadota</taxon>
        <taxon>Gammaproteobacteria</taxon>
        <taxon>Enterobacterales</taxon>
        <taxon>Enterobacteriaceae</taxon>
        <taxon>Salmonella</taxon>
    </lineage>
</organism>